<comment type="function">
    <text evidence="1">Binds to 23S rRNA. Forms part of two intersubunit bridges in the 70S ribosome.</text>
</comment>
<comment type="subunit">
    <text evidence="1">Part of the 50S ribosomal subunit. Forms a cluster with proteins L3 and L19. In the 70S ribosome, L14 and L19 interact and together make contacts with the 16S rRNA in bridges B5 and B8.</text>
</comment>
<comment type="similarity">
    <text evidence="1">Belongs to the universal ribosomal protein uL14 family.</text>
</comment>
<evidence type="ECO:0000255" key="1">
    <source>
        <dbReference type="HAMAP-Rule" id="MF_01367"/>
    </source>
</evidence>
<evidence type="ECO:0000305" key="2"/>
<keyword id="KW-0687">Ribonucleoprotein</keyword>
<keyword id="KW-0689">Ribosomal protein</keyword>
<keyword id="KW-0694">RNA-binding</keyword>
<keyword id="KW-0699">rRNA-binding</keyword>
<organism>
    <name type="scientific">Staphylococcus aureus (strain COL)</name>
    <dbReference type="NCBI Taxonomy" id="93062"/>
    <lineage>
        <taxon>Bacteria</taxon>
        <taxon>Bacillati</taxon>
        <taxon>Bacillota</taxon>
        <taxon>Bacilli</taxon>
        <taxon>Bacillales</taxon>
        <taxon>Staphylococcaceae</taxon>
        <taxon>Staphylococcus</taxon>
    </lineage>
</organism>
<protein>
    <recommendedName>
        <fullName evidence="1">Large ribosomal subunit protein uL14</fullName>
    </recommendedName>
    <alternativeName>
        <fullName evidence="2">50S ribosomal protein L14</fullName>
    </alternativeName>
</protein>
<accession>Q5HDW8</accession>
<gene>
    <name evidence="1" type="primary">rplN</name>
    <name type="ordered locus">SACOL2229</name>
</gene>
<name>RL14_STAAC</name>
<reference key="1">
    <citation type="journal article" date="2005" name="J. Bacteriol.">
        <title>Insights on evolution of virulence and resistance from the complete genome analysis of an early methicillin-resistant Staphylococcus aureus strain and a biofilm-producing methicillin-resistant Staphylococcus epidermidis strain.</title>
        <authorList>
            <person name="Gill S.R."/>
            <person name="Fouts D.E."/>
            <person name="Archer G.L."/>
            <person name="Mongodin E.F."/>
            <person name="DeBoy R.T."/>
            <person name="Ravel J."/>
            <person name="Paulsen I.T."/>
            <person name="Kolonay J.F."/>
            <person name="Brinkac L.M."/>
            <person name="Beanan M.J."/>
            <person name="Dodson R.J."/>
            <person name="Daugherty S.C."/>
            <person name="Madupu R."/>
            <person name="Angiuoli S.V."/>
            <person name="Durkin A.S."/>
            <person name="Haft D.H."/>
            <person name="Vamathevan J.J."/>
            <person name="Khouri H."/>
            <person name="Utterback T.R."/>
            <person name="Lee C."/>
            <person name="Dimitrov G."/>
            <person name="Jiang L."/>
            <person name="Qin H."/>
            <person name="Weidman J."/>
            <person name="Tran K."/>
            <person name="Kang K.H."/>
            <person name="Hance I.R."/>
            <person name="Nelson K.E."/>
            <person name="Fraser C.M."/>
        </authorList>
    </citation>
    <scope>NUCLEOTIDE SEQUENCE [LARGE SCALE GENOMIC DNA]</scope>
    <source>
        <strain>COL</strain>
    </source>
</reference>
<sequence length="122" mass="13135">MIQQETRLKVADNSGAREVLTIKVLGGSGRKTANIGDVIVCTVKNATPGGVVKKGDVVKAVIVRTKSGVRRNDGSYIKFDENACVIIRDDKGPRGTRIFGPVARELREGNFMKIVSLAPEVL</sequence>
<proteinExistence type="inferred from homology"/>
<dbReference type="EMBL" id="CP000046">
    <property type="protein sequence ID" value="AAW37104.1"/>
    <property type="molecule type" value="Genomic_DNA"/>
</dbReference>
<dbReference type="RefSeq" id="WP_000615921.1">
    <property type="nucleotide sequence ID" value="NZ_JBGOFO010000004.1"/>
</dbReference>
<dbReference type="SMR" id="Q5HDW8"/>
<dbReference type="GeneID" id="98346552"/>
<dbReference type="KEGG" id="sac:SACOL2229"/>
<dbReference type="HOGENOM" id="CLU_095071_2_1_9"/>
<dbReference type="Proteomes" id="UP000000530">
    <property type="component" value="Chromosome"/>
</dbReference>
<dbReference type="GO" id="GO:0022625">
    <property type="term" value="C:cytosolic large ribosomal subunit"/>
    <property type="evidence" value="ECO:0007669"/>
    <property type="project" value="TreeGrafter"/>
</dbReference>
<dbReference type="GO" id="GO:0070180">
    <property type="term" value="F:large ribosomal subunit rRNA binding"/>
    <property type="evidence" value="ECO:0007669"/>
    <property type="project" value="TreeGrafter"/>
</dbReference>
<dbReference type="GO" id="GO:0003735">
    <property type="term" value="F:structural constituent of ribosome"/>
    <property type="evidence" value="ECO:0007669"/>
    <property type="project" value="InterPro"/>
</dbReference>
<dbReference type="GO" id="GO:0006412">
    <property type="term" value="P:translation"/>
    <property type="evidence" value="ECO:0007669"/>
    <property type="project" value="UniProtKB-UniRule"/>
</dbReference>
<dbReference type="CDD" id="cd00337">
    <property type="entry name" value="Ribosomal_uL14"/>
    <property type="match status" value="1"/>
</dbReference>
<dbReference type="FunFam" id="2.40.150.20:FF:000001">
    <property type="entry name" value="50S ribosomal protein L14"/>
    <property type="match status" value="1"/>
</dbReference>
<dbReference type="Gene3D" id="2.40.150.20">
    <property type="entry name" value="Ribosomal protein L14"/>
    <property type="match status" value="1"/>
</dbReference>
<dbReference type="HAMAP" id="MF_01367">
    <property type="entry name" value="Ribosomal_uL14"/>
    <property type="match status" value="1"/>
</dbReference>
<dbReference type="InterPro" id="IPR000218">
    <property type="entry name" value="Ribosomal_uL14"/>
</dbReference>
<dbReference type="InterPro" id="IPR005745">
    <property type="entry name" value="Ribosomal_uL14_bac-type"/>
</dbReference>
<dbReference type="InterPro" id="IPR019972">
    <property type="entry name" value="Ribosomal_uL14_CS"/>
</dbReference>
<dbReference type="InterPro" id="IPR036853">
    <property type="entry name" value="Ribosomal_uL14_sf"/>
</dbReference>
<dbReference type="NCBIfam" id="TIGR01067">
    <property type="entry name" value="rplN_bact"/>
    <property type="match status" value="1"/>
</dbReference>
<dbReference type="PANTHER" id="PTHR11761">
    <property type="entry name" value="50S/60S RIBOSOMAL PROTEIN L14/L23"/>
    <property type="match status" value="1"/>
</dbReference>
<dbReference type="PANTHER" id="PTHR11761:SF3">
    <property type="entry name" value="LARGE RIBOSOMAL SUBUNIT PROTEIN UL14M"/>
    <property type="match status" value="1"/>
</dbReference>
<dbReference type="Pfam" id="PF00238">
    <property type="entry name" value="Ribosomal_L14"/>
    <property type="match status" value="1"/>
</dbReference>
<dbReference type="SMART" id="SM01374">
    <property type="entry name" value="Ribosomal_L14"/>
    <property type="match status" value="1"/>
</dbReference>
<dbReference type="SUPFAM" id="SSF50193">
    <property type="entry name" value="Ribosomal protein L14"/>
    <property type="match status" value="1"/>
</dbReference>
<dbReference type="PROSITE" id="PS00049">
    <property type="entry name" value="RIBOSOMAL_L14"/>
    <property type="match status" value="1"/>
</dbReference>
<feature type="chain" id="PRO_0000224012" description="Large ribosomal subunit protein uL14">
    <location>
        <begin position="1"/>
        <end position="122"/>
    </location>
</feature>